<gene>
    <name evidence="1" type="primary">uppP</name>
    <name type="ordered locus">Deide_13160</name>
</gene>
<proteinExistence type="inferred from homology"/>
<comment type="function">
    <text evidence="1">Catalyzes the dephosphorylation of undecaprenyl diphosphate (UPP). Confers resistance to bacitracin.</text>
</comment>
<comment type="catalytic activity">
    <reaction evidence="1">
        <text>di-trans,octa-cis-undecaprenyl diphosphate + H2O = di-trans,octa-cis-undecaprenyl phosphate + phosphate + H(+)</text>
        <dbReference type="Rhea" id="RHEA:28094"/>
        <dbReference type="ChEBI" id="CHEBI:15377"/>
        <dbReference type="ChEBI" id="CHEBI:15378"/>
        <dbReference type="ChEBI" id="CHEBI:43474"/>
        <dbReference type="ChEBI" id="CHEBI:58405"/>
        <dbReference type="ChEBI" id="CHEBI:60392"/>
        <dbReference type="EC" id="3.6.1.27"/>
    </reaction>
</comment>
<comment type="subcellular location">
    <subcellularLocation>
        <location evidence="1">Cell membrane</location>
        <topology evidence="1">Multi-pass membrane protein</topology>
    </subcellularLocation>
</comment>
<comment type="miscellaneous">
    <text>Bacitracin is thought to be involved in the inhibition of peptidoglycan synthesis by sequestering undecaprenyl diphosphate, thereby reducing the pool of lipid carrier available.</text>
</comment>
<comment type="similarity">
    <text evidence="1">Belongs to the UppP family.</text>
</comment>
<accession>C1CVN6</accession>
<feature type="chain" id="PRO_1000213146" description="Undecaprenyl-diphosphatase">
    <location>
        <begin position="1"/>
        <end position="275"/>
    </location>
</feature>
<feature type="transmembrane region" description="Helical" evidence="1">
    <location>
        <begin position="1"/>
        <end position="21"/>
    </location>
</feature>
<feature type="transmembrane region" description="Helical" evidence="1">
    <location>
        <begin position="42"/>
        <end position="62"/>
    </location>
</feature>
<feature type="transmembrane region" description="Helical" evidence="1">
    <location>
        <begin position="80"/>
        <end position="100"/>
    </location>
</feature>
<feature type="transmembrane region" description="Helical" evidence="1">
    <location>
        <begin position="107"/>
        <end position="127"/>
    </location>
</feature>
<feature type="transmembrane region" description="Helical" evidence="1">
    <location>
        <begin position="147"/>
        <end position="167"/>
    </location>
</feature>
<feature type="transmembrane region" description="Helical" evidence="1">
    <location>
        <begin position="184"/>
        <end position="204"/>
    </location>
</feature>
<feature type="transmembrane region" description="Helical" evidence="1">
    <location>
        <begin position="214"/>
        <end position="234"/>
    </location>
</feature>
<feature type="transmembrane region" description="Helical" evidence="1">
    <location>
        <begin position="249"/>
        <end position="269"/>
    </location>
</feature>
<reference key="1">
    <citation type="journal article" date="2009" name="PLoS Genet.">
        <title>Alliance of proteomics and genomics to unravel the specificities of Sahara bacterium Deinococcus deserti.</title>
        <authorList>
            <person name="de Groot A."/>
            <person name="Dulermo R."/>
            <person name="Ortet P."/>
            <person name="Blanchard L."/>
            <person name="Guerin P."/>
            <person name="Fernandez B."/>
            <person name="Vacherie B."/>
            <person name="Dossat C."/>
            <person name="Jolivet E."/>
            <person name="Siguier P."/>
            <person name="Chandler M."/>
            <person name="Barakat M."/>
            <person name="Dedieu A."/>
            <person name="Barbe V."/>
            <person name="Heulin T."/>
            <person name="Sommer S."/>
            <person name="Achouak W."/>
            <person name="Armengaud J."/>
        </authorList>
    </citation>
    <scope>NUCLEOTIDE SEQUENCE [LARGE SCALE GENOMIC DNA]</scope>
    <source>
        <strain>DSM 17065 / CIP 109153 / LMG 22923 / VCD115</strain>
    </source>
</reference>
<keyword id="KW-0046">Antibiotic resistance</keyword>
<keyword id="KW-1003">Cell membrane</keyword>
<keyword id="KW-0133">Cell shape</keyword>
<keyword id="KW-0961">Cell wall biogenesis/degradation</keyword>
<keyword id="KW-0378">Hydrolase</keyword>
<keyword id="KW-0472">Membrane</keyword>
<keyword id="KW-0573">Peptidoglycan synthesis</keyword>
<keyword id="KW-1185">Reference proteome</keyword>
<keyword id="KW-0812">Transmembrane</keyword>
<keyword id="KW-1133">Transmembrane helix</keyword>
<organism>
    <name type="scientific">Deinococcus deserti (strain DSM 17065 / CIP 109153 / LMG 22923 / VCD115)</name>
    <dbReference type="NCBI Taxonomy" id="546414"/>
    <lineage>
        <taxon>Bacteria</taxon>
        <taxon>Thermotogati</taxon>
        <taxon>Deinococcota</taxon>
        <taxon>Deinococci</taxon>
        <taxon>Deinococcales</taxon>
        <taxon>Deinococcaceae</taxon>
        <taxon>Deinococcus</taxon>
    </lineage>
</organism>
<dbReference type="EC" id="3.6.1.27" evidence="1"/>
<dbReference type="EMBL" id="CP001114">
    <property type="protein sequence ID" value="ACO46253.1"/>
    <property type="molecule type" value="Genomic_DNA"/>
</dbReference>
<dbReference type="RefSeq" id="WP_012693376.1">
    <property type="nucleotide sequence ID" value="NC_012526.1"/>
</dbReference>
<dbReference type="SMR" id="C1CVN6"/>
<dbReference type="STRING" id="546414.Deide_13160"/>
<dbReference type="PaxDb" id="546414-Deide_13160"/>
<dbReference type="KEGG" id="ddr:Deide_13160"/>
<dbReference type="eggNOG" id="COG1968">
    <property type="taxonomic scope" value="Bacteria"/>
</dbReference>
<dbReference type="HOGENOM" id="CLU_060296_2_0_0"/>
<dbReference type="OrthoDB" id="9808289at2"/>
<dbReference type="Proteomes" id="UP000002208">
    <property type="component" value="Chromosome"/>
</dbReference>
<dbReference type="GO" id="GO:0005886">
    <property type="term" value="C:plasma membrane"/>
    <property type="evidence" value="ECO:0007669"/>
    <property type="project" value="UniProtKB-SubCell"/>
</dbReference>
<dbReference type="GO" id="GO:0050380">
    <property type="term" value="F:undecaprenyl-diphosphatase activity"/>
    <property type="evidence" value="ECO:0007669"/>
    <property type="project" value="UniProtKB-UniRule"/>
</dbReference>
<dbReference type="GO" id="GO:0071555">
    <property type="term" value="P:cell wall organization"/>
    <property type="evidence" value="ECO:0007669"/>
    <property type="project" value="UniProtKB-KW"/>
</dbReference>
<dbReference type="GO" id="GO:0009252">
    <property type="term" value="P:peptidoglycan biosynthetic process"/>
    <property type="evidence" value="ECO:0007669"/>
    <property type="project" value="UniProtKB-KW"/>
</dbReference>
<dbReference type="GO" id="GO:0008360">
    <property type="term" value="P:regulation of cell shape"/>
    <property type="evidence" value="ECO:0007669"/>
    <property type="project" value="UniProtKB-KW"/>
</dbReference>
<dbReference type="GO" id="GO:0046677">
    <property type="term" value="P:response to antibiotic"/>
    <property type="evidence" value="ECO:0007669"/>
    <property type="project" value="UniProtKB-UniRule"/>
</dbReference>
<dbReference type="HAMAP" id="MF_01006">
    <property type="entry name" value="Undec_diphosphatase"/>
    <property type="match status" value="1"/>
</dbReference>
<dbReference type="InterPro" id="IPR003824">
    <property type="entry name" value="UppP"/>
</dbReference>
<dbReference type="NCBIfam" id="NF001389">
    <property type="entry name" value="PRK00281.1-2"/>
    <property type="match status" value="1"/>
</dbReference>
<dbReference type="NCBIfam" id="NF001390">
    <property type="entry name" value="PRK00281.1-4"/>
    <property type="match status" value="1"/>
</dbReference>
<dbReference type="NCBIfam" id="TIGR00753">
    <property type="entry name" value="undec_PP_bacA"/>
    <property type="match status" value="1"/>
</dbReference>
<dbReference type="PANTHER" id="PTHR30622">
    <property type="entry name" value="UNDECAPRENYL-DIPHOSPHATASE"/>
    <property type="match status" value="1"/>
</dbReference>
<dbReference type="PANTHER" id="PTHR30622:SF3">
    <property type="entry name" value="UNDECAPRENYL-DIPHOSPHATASE"/>
    <property type="match status" value="1"/>
</dbReference>
<dbReference type="Pfam" id="PF02673">
    <property type="entry name" value="BacA"/>
    <property type="match status" value="1"/>
</dbReference>
<evidence type="ECO:0000255" key="1">
    <source>
        <dbReference type="HAMAP-Rule" id="MF_01006"/>
    </source>
</evidence>
<name>UPPP_DEIDV</name>
<sequence length="275" mass="29621">MDWVYAIVYGIVEGITEFLPISSTGHLILTGNLMGVPWSKEVKDAFEVVIQGGAILSVLVYYWRDFLKIRHLGHDRSQQTLWTGVLVATIPAVVLGLAFGDQIQAVLFKPSVVAWALIVGGVLMWLIESRRVQPQVHAIETIGVRRSLLIGVLQCLALVWPGFSRSASSILGGMALGLDRPTATKFSFYLGVPTLGGAALLNLVKERELIFGEIGLLNVVLGAGVSFVVAYLAIGWLLKFVSTNNFKGFAVYRVAVGVLILVLIATGVMSNGSLA</sequence>
<protein>
    <recommendedName>
        <fullName evidence="1">Undecaprenyl-diphosphatase</fullName>
        <ecNumber evidence="1">3.6.1.27</ecNumber>
    </recommendedName>
    <alternativeName>
        <fullName evidence="1">Bacitracin resistance protein</fullName>
    </alternativeName>
    <alternativeName>
        <fullName evidence="1">Undecaprenyl pyrophosphate phosphatase</fullName>
    </alternativeName>
</protein>